<organism>
    <name type="scientific">Thermococcus kodakarensis (strain ATCC BAA-918 / JCM 12380 / KOD1)</name>
    <name type="common">Pyrococcus kodakaraensis (strain KOD1)</name>
    <dbReference type="NCBI Taxonomy" id="69014"/>
    <lineage>
        <taxon>Archaea</taxon>
        <taxon>Methanobacteriati</taxon>
        <taxon>Methanobacteriota</taxon>
        <taxon>Thermococci</taxon>
        <taxon>Thermococcales</taxon>
        <taxon>Thermococcaceae</taxon>
        <taxon>Thermococcus</taxon>
    </lineage>
</organism>
<accession>Q5JE27</accession>
<proteinExistence type="inferred from homology"/>
<reference key="1">
    <citation type="journal article" date="2005" name="Genome Res.">
        <title>Complete genome sequence of the hyperthermophilic archaeon Thermococcus kodakaraensis KOD1 and comparison with Pyrococcus genomes.</title>
        <authorList>
            <person name="Fukui T."/>
            <person name="Atomi H."/>
            <person name="Kanai T."/>
            <person name="Matsumi R."/>
            <person name="Fujiwara S."/>
            <person name="Imanaka T."/>
        </authorList>
    </citation>
    <scope>NUCLEOTIDE SEQUENCE [LARGE SCALE GENOMIC DNA]</scope>
    <source>
        <strain>ATCC BAA-918 / JCM 12380 / KOD1</strain>
    </source>
</reference>
<evidence type="ECO:0000255" key="1">
    <source>
        <dbReference type="HAMAP-Rule" id="MF_01287"/>
    </source>
</evidence>
<dbReference type="EC" id="1.3.-.-" evidence="1"/>
<dbReference type="EMBL" id="AP006878">
    <property type="protein sequence ID" value="BAD85277.1"/>
    <property type="molecule type" value="Genomic_DNA"/>
</dbReference>
<dbReference type="RefSeq" id="WP_011250039.1">
    <property type="nucleotide sequence ID" value="NC_006624.1"/>
</dbReference>
<dbReference type="SMR" id="Q5JE27"/>
<dbReference type="FunCoup" id="Q5JE27">
    <property type="interactions" value="50"/>
</dbReference>
<dbReference type="STRING" id="69014.TK1088"/>
<dbReference type="EnsemblBacteria" id="BAD85277">
    <property type="protein sequence ID" value="BAD85277"/>
    <property type="gene ID" value="TK1088"/>
</dbReference>
<dbReference type="GeneID" id="78447601"/>
<dbReference type="KEGG" id="tko:TK1088"/>
<dbReference type="PATRIC" id="fig|69014.16.peg.1064"/>
<dbReference type="eggNOG" id="arCOG00570">
    <property type="taxonomic scope" value="Archaea"/>
</dbReference>
<dbReference type="HOGENOM" id="CLU_024648_0_0_2"/>
<dbReference type="InParanoid" id="Q5JE27"/>
<dbReference type="OrthoDB" id="6062at2157"/>
<dbReference type="PhylomeDB" id="Q5JE27"/>
<dbReference type="UniPathway" id="UPA00940"/>
<dbReference type="Proteomes" id="UP000000536">
    <property type="component" value="Chromosome"/>
</dbReference>
<dbReference type="GO" id="GO:0016020">
    <property type="term" value="C:membrane"/>
    <property type="evidence" value="ECO:0007669"/>
    <property type="project" value="GOC"/>
</dbReference>
<dbReference type="GO" id="GO:0050660">
    <property type="term" value="F:flavin adenine dinucleotide binding"/>
    <property type="evidence" value="ECO:0007669"/>
    <property type="project" value="UniProtKB-UniRule"/>
</dbReference>
<dbReference type="GO" id="GO:0045550">
    <property type="term" value="F:geranylgeranyl reductase activity"/>
    <property type="evidence" value="ECO:0007669"/>
    <property type="project" value="InterPro"/>
</dbReference>
<dbReference type="GO" id="GO:0016628">
    <property type="term" value="F:oxidoreductase activity, acting on the CH-CH group of donors, NAD or NADP as acceptor"/>
    <property type="evidence" value="ECO:0007669"/>
    <property type="project" value="InterPro"/>
</dbReference>
<dbReference type="GO" id="GO:0046474">
    <property type="term" value="P:glycerophospholipid biosynthetic process"/>
    <property type="evidence" value="ECO:0007669"/>
    <property type="project" value="UniProtKB-UniRule"/>
</dbReference>
<dbReference type="GO" id="GO:0046467">
    <property type="term" value="P:membrane lipid biosynthetic process"/>
    <property type="evidence" value="ECO:0007669"/>
    <property type="project" value="InterPro"/>
</dbReference>
<dbReference type="Gene3D" id="3.30.9.10">
    <property type="entry name" value="D-Amino Acid Oxidase, subunit A, domain 2"/>
    <property type="match status" value="1"/>
</dbReference>
<dbReference type="Gene3D" id="3.50.50.60">
    <property type="entry name" value="FAD/NAD(P)-binding domain"/>
    <property type="match status" value="1"/>
</dbReference>
<dbReference type="HAMAP" id="MF_01287">
    <property type="entry name" value="DGGGPL_reductase"/>
    <property type="match status" value="1"/>
</dbReference>
<dbReference type="InterPro" id="IPR023590">
    <property type="entry name" value="DGGGPL_reductase"/>
</dbReference>
<dbReference type="InterPro" id="IPR036188">
    <property type="entry name" value="FAD/NAD-bd_sf"/>
</dbReference>
<dbReference type="InterPro" id="IPR011777">
    <property type="entry name" value="Geranylgeranyl_Rdtase_fam"/>
</dbReference>
<dbReference type="InterPro" id="IPR050407">
    <property type="entry name" value="Geranylgeranyl_reductase"/>
</dbReference>
<dbReference type="InterPro" id="IPR054715">
    <property type="entry name" value="GGR_cat"/>
</dbReference>
<dbReference type="NCBIfam" id="TIGR02032">
    <property type="entry name" value="GG-red-SF"/>
    <property type="match status" value="1"/>
</dbReference>
<dbReference type="PANTHER" id="PTHR42685:SF18">
    <property type="entry name" value="DIGERANYLGERANYLGLYCEROPHOSPHOLIPID REDUCTASE"/>
    <property type="match status" value="1"/>
</dbReference>
<dbReference type="PANTHER" id="PTHR42685">
    <property type="entry name" value="GERANYLGERANYL DIPHOSPHATE REDUCTASE"/>
    <property type="match status" value="1"/>
</dbReference>
<dbReference type="Pfam" id="PF12831">
    <property type="entry name" value="FAD_oxidored"/>
    <property type="match status" value="1"/>
</dbReference>
<dbReference type="Pfam" id="PF22578">
    <property type="entry name" value="GGR_cat"/>
    <property type="match status" value="1"/>
</dbReference>
<dbReference type="PRINTS" id="PR00420">
    <property type="entry name" value="RNGMNOXGNASE"/>
</dbReference>
<dbReference type="SUPFAM" id="SSF51905">
    <property type="entry name" value="FAD/NAD(P)-binding domain"/>
    <property type="match status" value="1"/>
</dbReference>
<name>GGR_THEKO</name>
<protein>
    <recommendedName>
        <fullName evidence="1">Digeranylgeranylglycerophospholipid reductase</fullName>
        <shortName evidence="1">DGGGPL reductase</shortName>
        <ecNumber evidence="1">1.3.-.-</ecNumber>
    </recommendedName>
    <alternativeName>
        <fullName evidence="1">2,3-bis-O-geranylgeranylglyceryl phosphate reductase</fullName>
    </alternativeName>
    <alternativeName>
        <fullName evidence="1">Geranylgeranyl reductase</fullName>
        <shortName evidence="1">GGR</shortName>
    </alternativeName>
</protein>
<comment type="function">
    <text evidence="1">Is involved in the reduction of 2,3-digeranylgeranylglycerophospholipids (unsaturated archaeols) into 2,3-diphytanylglycerophospholipids (saturated archaeols) in the biosynthesis of archaeal membrane lipids. Catalyzes the formation of archaetidic acid (2,3-di-O-phytanyl-sn-glyceryl phosphate) from 2,3-di-O-geranylgeranylglyceryl phosphate (DGGGP) via the hydrogenation of each double bond of the isoprenoid chains. Is also probably able to reduce double bonds of geranyl groups in CDP-2,3-bis-O-(geranylgeranyl)-sn-glycerol and archaetidylserine, thus acting at various stages in the biosynthesis of archaeal membrane lipids.</text>
</comment>
<comment type="catalytic activity">
    <reaction evidence="1">
        <text>a 2,3-bis-O-phytanyl-sn-glycerol 1-phospholipid + 8 A = a 2,3-bis-O-(geranylgeranyl)-sn-glycerol 1-phospholipid + 8 AH2</text>
        <dbReference type="Rhea" id="RHEA:64376"/>
        <dbReference type="ChEBI" id="CHEBI:13193"/>
        <dbReference type="ChEBI" id="CHEBI:17499"/>
        <dbReference type="ChEBI" id="CHEBI:138139"/>
        <dbReference type="ChEBI" id="CHEBI:138140"/>
    </reaction>
    <physiologicalReaction direction="right-to-left" evidence="1">
        <dbReference type="Rhea" id="RHEA:64378"/>
    </physiologicalReaction>
</comment>
<comment type="catalytic activity">
    <reaction evidence="1">
        <text>2,3-bis-O-(phytanyl)-sn-glycerol 1-phosphate + 8 A = 2,3-bis-O-(geranylgeranyl)-sn-glycerol 1-phosphate + 8 AH2</text>
        <dbReference type="Rhea" id="RHEA:64368"/>
        <dbReference type="ChEBI" id="CHEBI:13193"/>
        <dbReference type="ChEBI" id="CHEBI:17499"/>
        <dbReference type="ChEBI" id="CHEBI:58837"/>
        <dbReference type="ChEBI" id="CHEBI:73125"/>
    </reaction>
    <physiologicalReaction direction="right-to-left" evidence="1">
        <dbReference type="Rhea" id="RHEA:64370"/>
    </physiologicalReaction>
</comment>
<comment type="catalytic activity">
    <reaction evidence="1">
        <text>CDP-2,3-bis-O-(geranylgeranyl)-sn-glycerol + 8 AH2 = CDP-2,3-bis-O-(phytanyl)-sn-glycerol + 8 A</text>
        <dbReference type="Rhea" id="RHEA:84207"/>
        <dbReference type="ChEBI" id="CHEBI:13193"/>
        <dbReference type="ChEBI" id="CHEBI:17499"/>
        <dbReference type="ChEBI" id="CHEBI:58838"/>
        <dbReference type="ChEBI" id="CHEBI:74004"/>
    </reaction>
    <physiologicalReaction direction="left-to-right" evidence="1">
        <dbReference type="Rhea" id="RHEA:84208"/>
    </physiologicalReaction>
</comment>
<comment type="catalytic activity">
    <reaction evidence="1">
        <text>archaetidylserine + 8 AH2 = 2,3-bis-O-phytanyl-sn-glycero-3-phospho-L-serine + 8 A</text>
        <dbReference type="Rhea" id="RHEA:84215"/>
        <dbReference type="ChEBI" id="CHEBI:13193"/>
        <dbReference type="ChEBI" id="CHEBI:17499"/>
        <dbReference type="ChEBI" id="CHEBI:71517"/>
        <dbReference type="ChEBI" id="CHEBI:74853"/>
    </reaction>
    <physiologicalReaction direction="left-to-right" evidence="1">
        <dbReference type="Rhea" id="RHEA:84216"/>
    </physiologicalReaction>
</comment>
<comment type="cofactor">
    <cofactor evidence="1">
        <name>FAD</name>
        <dbReference type="ChEBI" id="CHEBI:57692"/>
    </cofactor>
    <text evidence="1">Binds 1 FAD per subunit.</text>
</comment>
<comment type="pathway">
    <text evidence="1">Membrane lipid metabolism; glycerophospholipid metabolism.</text>
</comment>
<comment type="miscellaneous">
    <text evidence="1">Reduction reaction proceeds via syn addition of hydrogen for double bonds.</text>
</comment>
<comment type="similarity">
    <text evidence="1">Belongs to the geranylgeranyl reductase family. DGGGPL reductase subfamily.</text>
</comment>
<feature type="chain" id="PRO_0000351478" description="Digeranylgeranylglycerophospholipid reductase">
    <location>
        <begin position="1"/>
        <end position="395"/>
    </location>
</feature>
<feature type="binding site" evidence="1">
    <location>
        <position position="15"/>
    </location>
    <ligand>
        <name>FAD</name>
        <dbReference type="ChEBI" id="CHEBI:57692"/>
    </ligand>
</feature>
<feature type="binding site" evidence="1">
    <location>
        <position position="34"/>
    </location>
    <ligand>
        <name>FAD</name>
        <dbReference type="ChEBI" id="CHEBI:57692"/>
    </ligand>
</feature>
<feature type="binding site" evidence="1">
    <location>
        <position position="45"/>
    </location>
    <ligand>
        <name>FAD</name>
        <dbReference type="ChEBI" id="CHEBI:57692"/>
    </ligand>
</feature>
<feature type="binding site" evidence="1">
    <location>
        <position position="46"/>
    </location>
    <ligand>
        <name>FAD</name>
        <dbReference type="ChEBI" id="CHEBI:57692"/>
    </ligand>
</feature>
<feature type="binding site" evidence="1">
    <location>
        <position position="48"/>
    </location>
    <ligand>
        <name>FAD</name>
        <dbReference type="ChEBI" id="CHEBI:57692"/>
    </ligand>
</feature>
<feature type="binding site" evidence="1">
    <location>
        <position position="97"/>
    </location>
    <ligand>
        <name>FAD</name>
        <dbReference type="ChEBI" id="CHEBI:57692"/>
    </ligand>
</feature>
<feature type="binding site" evidence="1">
    <location>
        <position position="121"/>
    </location>
    <ligand>
        <name>FAD</name>
        <dbReference type="ChEBI" id="CHEBI:57692"/>
    </ligand>
</feature>
<feature type="binding site" evidence="1">
    <location>
        <position position="276"/>
    </location>
    <ligand>
        <name>FAD</name>
        <dbReference type="ChEBI" id="CHEBI:57692"/>
    </ligand>
</feature>
<feature type="binding site" evidence="1">
    <location>
        <position position="288"/>
    </location>
    <ligand>
        <name>FAD</name>
        <dbReference type="ChEBI" id="CHEBI:57692"/>
    </ligand>
</feature>
<feature type="binding site" evidence="1">
    <location>
        <position position="329"/>
    </location>
    <ligand>
        <name>a 2,3-bis-O-(geranylgeranyl)-sn-glycerol 1-phospholipid</name>
        <dbReference type="ChEBI" id="CHEBI:138140"/>
    </ligand>
</feature>
<keyword id="KW-0274">FAD</keyword>
<keyword id="KW-0285">Flavoprotein</keyword>
<keyword id="KW-0444">Lipid biosynthesis</keyword>
<keyword id="KW-0443">Lipid metabolism</keyword>
<keyword id="KW-0560">Oxidoreductase</keyword>
<keyword id="KW-0594">Phospholipid biosynthesis</keyword>
<keyword id="KW-1208">Phospholipid metabolism</keyword>
<keyword id="KW-1185">Reference proteome</keyword>
<gene>
    <name type="ordered locus">TK1088</name>
</gene>
<sequence length="395" mass="44157">MTWKYDVVVVGSGIAGPIVARNVAKAGFSVLLIDKKWAIGTPKQCAEAISIKVFDKYDIPYDKRFINREIYGAKLYSPSGYELEMRYKEVSGVILERKVFDKMLAYYAAKAGADVLARTEALDVIRKDGKIVGIKAKHEDEPVEIYADIIVAADGVESTIARKAGINTYAPPHEFDSGYEYEMLIEGFDPDLIHLWFGNEVAPRGYVWVFPKDEDRANVGIGINSDNPKTAKYYLDKWLEENNIPAKKLLEINVGLIPVGGFVKELAKDNVVVVGDAARQVNPMHGGGMAEAMEAGTIASKWIVKALEEENLSLLQNYTKEWWETDGKRLEKVLKVRRVTEKLTDEDLDLFIQILSGADAEKIASGDYAEVIKALLKHPKVLMSKRRLSLLKELL</sequence>